<sequence>MNFFLYFRTIFLIQLYFFNYSTFGCSASSTSVQSDTTNQVSVSCPKYTTIYTSGTSPDTKTIYPESTSTKSITTSTQSHSSPVIVVSTVGTVTETTISGSTEYTTTIPAEGITSGTVEIVEPTAGTVTETITSGTLPFTTTLAQASGTVSGTVEIVSPKNNPTTVYSGTVATTETFSSSTVVVIPTAICDGVRGLEYAVYDYTISSSMNEFCYPKNGQTDVFAFNEPAYFGSSDLDQSSPLFTGVFSSTDDIPEWASSWYLPPYPPQASDMASTYCACKVIVYQFFLRIPETDTYTLVVNNVDDVFFGWFGDKAISGWSNNNFDAYSYWHESPNMGLGTVGMGNFTVGNYPEGYFLPVRFVVANGAYIGGFDFYFTSDSTGPLATTSYSYTKTCTQQFLPFGQGNGGVNGPTEKLS</sequence>
<feature type="signal peptide" evidence="2">
    <location>
        <begin position="1"/>
        <end position="27"/>
    </location>
</feature>
<feature type="chain" id="PRO_0000437229" description="Putative cell agglutination protein pfl6">
    <location>
        <begin position="28"/>
        <end position="416"/>
    </location>
</feature>
<feature type="repeat" description="1" evidence="9">
    <location>
        <begin position="90"/>
        <end position="124"/>
    </location>
</feature>
<feature type="repeat" description="2" evidence="9">
    <location>
        <begin position="125"/>
        <end position="160"/>
    </location>
</feature>
<feature type="domain" description="PA14" evidence="4">
    <location>
        <begin position="224"/>
        <end position="390"/>
    </location>
</feature>
<feature type="region of interest" description="2 X 36 AA approximate tandem repeats" evidence="9">
    <location>
        <begin position="90"/>
        <end position="160"/>
    </location>
</feature>
<feature type="glycosylation site" description="N-linked (GlcNAc...) asparagine" evidence="3">
    <location>
        <position position="19"/>
    </location>
</feature>
<feature type="glycosylation site" description="N-linked (GlcNAc...) asparagine" evidence="3">
    <location>
        <position position="344"/>
    </location>
</feature>
<accession>P0CU05</accession>
<accession>Q9P329</accession>
<organism>
    <name type="scientific">Schizosaccharomyces pombe (strain 972 / ATCC 24843)</name>
    <name type="common">Fission yeast</name>
    <dbReference type="NCBI Taxonomy" id="284812"/>
    <lineage>
        <taxon>Eukaryota</taxon>
        <taxon>Fungi</taxon>
        <taxon>Dikarya</taxon>
        <taxon>Ascomycota</taxon>
        <taxon>Taphrinomycotina</taxon>
        <taxon>Schizosaccharomycetes</taxon>
        <taxon>Schizosaccharomycetales</taxon>
        <taxon>Schizosaccharomycetaceae</taxon>
        <taxon>Schizosaccharomyces</taxon>
    </lineage>
</organism>
<protein>
    <recommendedName>
        <fullName evidence="8">Putative cell agglutination protein pfl6</fullName>
    </recommendedName>
    <alternativeName>
        <fullName evidence="6">Adhesin pfl6</fullName>
    </alternativeName>
    <alternativeName>
        <fullName evidence="7">Pombe flocculin 6</fullName>
    </alternativeName>
</protein>
<keyword id="KW-0325">Glycoprotein</keyword>
<keyword id="KW-1185">Reference proteome</keyword>
<keyword id="KW-0677">Repeat</keyword>
<keyword id="KW-0732">Signal</keyword>
<gene>
    <name evidence="7" type="primary">pfl6</name>
    <name evidence="10" type="ORF">SPAC977.07c</name>
</gene>
<reference key="1">
    <citation type="journal article" date="2002" name="Nature">
        <title>The genome sequence of Schizosaccharomyces pombe.</title>
        <authorList>
            <person name="Wood V."/>
            <person name="Gwilliam R."/>
            <person name="Rajandream M.A."/>
            <person name="Lyne M.H."/>
            <person name="Lyne R."/>
            <person name="Stewart A."/>
            <person name="Sgouros J.G."/>
            <person name="Peat N."/>
            <person name="Hayles J."/>
            <person name="Baker S.G."/>
            <person name="Basham D."/>
            <person name="Bowman S."/>
            <person name="Brooks K."/>
            <person name="Brown D."/>
            <person name="Brown S."/>
            <person name="Chillingworth T."/>
            <person name="Churcher C.M."/>
            <person name="Collins M."/>
            <person name="Connor R."/>
            <person name="Cronin A."/>
            <person name="Davis P."/>
            <person name="Feltwell T."/>
            <person name="Fraser A."/>
            <person name="Gentles S."/>
            <person name="Goble A."/>
            <person name="Hamlin N."/>
            <person name="Harris D.E."/>
            <person name="Hidalgo J."/>
            <person name="Hodgson G."/>
            <person name="Holroyd S."/>
            <person name="Hornsby T."/>
            <person name="Howarth S."/>
            <person name="Huckle E.J."/>
            <person name="Hunt S."/>
            <person name="Jagels K."/>
            <person name="James K.D."/>
            <person name="Jones L."/>
            <person name="Jones M."/>
            <person name="Leather S."/>
            <person name="McDonald S."/>
            <person name="McLean J."/>
            <person name="Mooney P."/>
            <person name="Moule S."/>
            <person name="Mungall K.L."/>
            <person name="Murphy L.D."/>
            <person name="Niblett D."/>
            <person name="Odell C."/>
            <person name="Oliver K."/>
            <person name="O'Neil S."/>
            <person name="Pearson D."/>
            <person name="Quail M.A."/>
            <person name="Rabbinowitsch E."/>
            <person name="Rutherford K.M."/>
            <person name="Rutter S."/>
            <person name="Saunders D."/>
            <person name="Seeger K."/>
            <person name="Sharp S."/>
            <person name="Skelton J."/>
            <person name="Simmonds M.N."/>
            <person name="Squares R."/>
            <person name="Squares S."/>
            <person name="Stevens K."/>
            <person name="Taylor K."/>
            <person name="Taylor R.G."/>
            <person name="Tivey A."/>
            <person name="Walsh S.V."/>
            <person name="Warren T."/>
            <person name="Whitehead S."/>
            <person name="Woodward J.R."/>
            <person name="Volckaert G."/>
            <person name="Aert R."/>
            <person name="Robben J."/>
            <person name="Grymonprez B."/>
            <person name="Weltjens I."/>
            <person name="Vanstreels E."/>
            <person name="Rieger M."/>
            <person name="Schaefer M."/>
            <person name="Mueller-Auer S."/>
            <person name="Gabel C."/>
            <person name="Fuchs M."/>
            <person name="Duesterhoeft A."/>
            <person name="Fritzc C."/>
            <person name="Holzer E."/>
            <person name="Moestl D."/>
            <person name="Hilbert H."/>
            <person name="Borzym K."/>
            <person name="Langer I."/>
            <person name="Beck A."/>
            <person name="Lehrach H."/>
            <person name="Reinhardt R."/>
            <person name="Pohl T.M."/>
            <person name="Eger P."/>
            <person name="Zimmermann W."/>
            <person name="Wedler H."/>
            <person name="Wambutt R."/>
            <person name="Purnelle B."/>
            <person name="Goffeau A."/>
            <person name="Cadieu E."/>
            <person name="Dreano S."/>
            <person name="Gloux S."/>
            <person name="Lelaure V."/>
            <person name="Mottier S."/>
            <person name="Galibert F."/>
            <person name="Aves S.J."/>
            <person name="Xiang Z."/>
            <person name="Hunt C."/>
            <person name="Moore K."/>
            <person name="Hurst S.M."/>
            <person name="Lucas M."/>
            <person name="Rochet M."/>
            <person name="Gaillardin C."/>
            <person name="Tallada V.A."/>
            <person name="Garzon A."/>
            <person name="Thode G."/>
            <person name="Daga R.R."/>
            <person name="Cruzado L."/>
            <person name="Jimenez J."/>
            <person name="Sanchez M."/>
            <person name="del Rey F."/>
            <person name="Benito J."/>
            <person name="Dominguez A."/>
            <person name="Revuelta J.L."/>
            <person name="Moreno S."/>
            <person name="Armstrong J."/>
            <person name="Forsburg S.L."/>
            <person name="Cerutti L."/>
            <person name="Lowe T."/>
            <person name="McCombie W.R."/>
            <person name="Paulsen I."/>
            <person name="Potashkin J."/>
            <person name="Shpakovski G.V."/>
            <person name="Ussery D."/>
            <person name="Barrell B.G."/>
            <person name="Nurse P."/>
        </authorList>
    </citation>
    <scope>NUCLEOTIDE SEQUENCE [LARGE SCALE GENOMIC DNA]</scope>
    <source>
        <strain>972 / ATCC 24843</strain>
    </source>
</reference>
<reference key="2">
    <citation type="journal article" date="2008" name="Fungal Genet. Biol.">
        <title>Molecular phylogenetics of ascomycotal adhesins--a novel family of putative cell-surface adhesive proteins in fission yeasts.</title>
        <authorList>
            <person name="Linder T."/>
            <person name="Gustafsson C.M."/>
        </authorList>
    </citation>
    <scope>DOMAIN</scope>
    <scope>REPEATS</scope>
</reference>
<reference key="3">
    <citation type="journal article" date="2012" name="PLoS Genet.">
        <title>Deciphering the transcriptional-regulatory network of flocculation in Schizosaccharomyces pombe.</title>
        <authorList>
            <person name="Kwon E.J."/>
            <person name="Laderoute A."/>
            <person name="Chatfield-Reed K."/>
            <person name="Vachon L."/>
            <person name="Karagiannis J."/>
            <person name="Chua G."/>
        </authorList>
    </citation>
    <scope>FUNCTION</scope>
</reference>
<name>PFL6_SCHPO</name>
<proteinExistence type="inferred from homology"/>
<dbReference type="EMBL" id="CU329670">
    <property type="protein sequence ID" value="CAB69629.1"/>
    <property type="molecule type" value="Genomic_DNA"/>
</dbReference>
<dbReference type="PIR" id="T50279">
    <property type="entry name" value="T50279"/>
</dbReference>
<dbReference type="RefSeq" id="NP_592770.1">
    <property type="nucleotide sequence ID" value="NM_001020933.2"/>
</dbReference>
<dbReference type="RefSeq" id="NP_592779.1">
    <property type="nucleotide sequence ID" value="NM_001018179.1"/>
</dbReference>
<dbReference type="STRING" id="284812.P0CU05"/>
<dbReference type="GlyCosmos" id="P0CU05">
    <property type="glycosylation" value="2 sites, No reported glycans"/>
</dbReference>
<dbReference type="PaxDb" id="4896-SPAC977.07c.1"/>
<dbReference type="EnsemblFungi" id="SPAC977.07c.1">
    <property type="protein sequence ID" value="SPAC977.07c.1:pep"/>
    <property type="gene ID" value="SPAC977.07c"/>
</dbReference>
<dbReference type="EnsemblFungi" id="SPBC1348.08c.1">
    <property type="protein sequence ID" value="SPBC1348.08c.1:pep"/>
    <property type="gene ID" value="SPBC1348.08c"/>
</dbReference>
<dbReference type="GeneID" id="2543047"/>
<dbReference type="KEGG" id="spo:2541886"/>
<dbReference type="KEGG" id="spo:2543047"/>
<dbReference type="PomBase" id="SPAC977.07c">
    <property type="gene designation" value="pfl6"/>
</dbReference>
<dbReference type="VEuPathDB" id="FungiDB:SPAC977.07c"/>
<dbReference type="VEuPathDB" id="FungiDB:SPBC1348.08c"/>
<dbReference type="eggNOG" id="ENOG502SWCY">
    <property type="taxonomic scope" value="Eukaryota"/>
</dbReference>
<dbReference type="InParanoid" id="P0CU05"/>
<dbReference type="PhylomeDB" id="P0CU05"/>
<dbReference type="PRO" id="PR:P0CU05"/>
<dbReference type="Proteomes" id="UP000002485">
    <property type="component" value="Chromosome I"/>
</dbReference>
<dbReference type="GO" id="GO:0010339">
    <property type="term" value="C:external side of cell wall"/>
    <property type="evidence" value="ECO:0000304"/>
    <property type="project" value="PomBase"/>
</dbReference>
<dbReference type="GO" id="GO:0098631">
    <property type="term" value="F:cell adhesion mediator activity"/>
    <property type="evidence" value="ECO:0000250"/>
    <property type="project" value="PomBase"/>
</dbReference>
<dbReference type="GO" id="GO:0000128">
    <property type="term" value="P:flocculation"/>
    <property type="evidence" value="ECO:0000315"/>
    <property type="project" value="PomBase"/>
</dbReference>
<dbReference type="FunFam" id="2.60.120.1560:FF:000006">
    <property type="entry name" value="Putative cell agglutination protein SPAC1348.08c"/>
    <property type="match status" value="1"/>
</dbReference>
<dbReference type="Gene3D" id="2.60.120.1560">
    <property type="match status" value="1"/>
</dbReference>
<dbReference type="InterPro" id="IPR018871">
    <property type="entry name" value="GLEYA_adhesin_domain"/>
</dbReference>
<dbReference type="InterPro" id="IPR037524">
    <property type="entry name" value="PA14/GLEYA"/>
</dbReference>
<dbReference type="InterPro" id="IPR051905">
    <property type="entry name" value="S_pombe_Mam3/Map4"/>
</dbReference>
<dbReference type="PANTHER" id="PTHR31492">
    <property type="entry name" value="M CELL-TYPE AGGLUTINATION PROTEIN MAM3-RELATED"/>
    <property type="match status" value="1"/>
</dbReference>
<dbReference type="PANTHER" id="PTHR31492:SF14">
    <property type="entry name" value="M CELL-TYPE AGGLUTINATION PROTEIN MAM3-RELATED"/>
    <property type="match status" value="1"/>
</dbReference>
<dbReference type="Pfam" id="PF10528">
    <property type="entry name" value="GLEYA"/>
    <property type="match status" value="1"/>
</dbReference>
<dbReference type="PROSITE" id="PS51820">
    <property type="entry name" value="PA14"/>
    <property type="match status" value="1"/>
</dbReference>
<comment type="function">
    <text evidence="1 5">May be involved in agglutination during conjugation or other aspects of colony formation (By similarity). Induces flocculation when overexpressed (PubMed:23236291).</text>
</comment>
<comment type="subcellular location">
    <subcellularLocation>
        <location evidence="9">Cell surface</location>
    </subcellularLocation>
</comment>
<comment type="similarity">
    <text evidence="8">Belongs to the mam3/map4 family.</text>
</comment>
<evidence type="ECO:0000250" key="1">
    <source>
        <dbReference type="UniProtKB" id="O74346"/>
    </source>
</evidence>
<evidence type="ECO:0000255" key="2"/>
<evidence type="ECO:0000255" key="3">
    <source>
        <dbReference type="PROSITE-ProRule" id="PRU00498"/>
    </source>
</evidence>
<evidence type="ECO:0000255" key="4">
    <source>
        <dbReference type="PROSITE-ProRule" id="PRU01164"/>
    </source>
</evidence>
<evidence type="ECO:0000269" key="5">
    <source>
    </source>
</evidence>
<evidence type="ECO:0000303" key="6">
    <source>
    </source>
</evidence>
<evidence type="ECO:0000303" key="7">
    <source>
    </source>
</evidence>
<evidence type="ECO:0000305" key="8"/>
<evidence type="ECO:0000305" key="9">
    <source>
    </source>
</evidence>
<evidence type="ECO:0000312" key="10">
    <source>
        <dbReference type="PomBase" id="SPAC977.07c"/>
    </source>
</evidence>